<gene>
    <name type="primary">mt-cyb</name>
    <name type="synonym">cob</name>
    <name type="synonym">cytb</name>
    <name type="synonym">mtcyb</name>
</gene>
<accession>Q9T9C8</accession>
<name>CYB_PAROL</name>
<keyword id="KW-0249">Electron transport</keyword>
<keyword id="KW-0349">Heme</keyword>
<keyword id="KW-0408">Iron</keyword>
<keyword id="KW-0472">Membrane</keyword>
<keyword id="KW-0479">Metal-binding</keyword>
<keyword id="KW-0496">Mitochondrion</keyword>
<keyword id="KW-0999">Mitochondrion inner membrane</keyword>
<keyword id="KW-0679">Respiratory chain</keyword>
<keyword id="KW-0812">Transmembrane</keyword>
<keyword id="KW-1133">Transmembrane helix</keyword>
<keyword id="KW-0813">Transport</keyword>
<keyword id="KW-0830">Ubiquinone</keyword>
<geneLocation type="mitochondrion"/>
<evidence type="ECO:0000250" key="1"/>
<evidence type="ECO:0000250" key="2">
    <source>
        <dbReference type="UniProtKB" id="P00157"/>
    </source>
</evidence>
<evidence type="ECO:0000255" key="3">
    <source>
        <dbReference type="PROSITE-ProRule" id="PRU00967"/>
    </source>
</evidence>
<evidence type="ECO:0000255" key="4">
    <source>
        <dbReference type="PROSITE-ProRule" id="PRU00968"/>
    </source>
</evidence>
<proteinExistence type="inferred from homology"/>
<feature type="chain" id="PRO_0000061354" description="Cytochrome b">
    <location>
        <begin position="1"/>
        <end position="380"/>
    </location>
</feature>
<feature type="transmembrane region" description="Helical" evidence="2">
    <location>
        <begin position="33"/>
        <end position="53"/>
    </location>
</feature>
<feature type="transmembrane region" description="Helical" evidence="2">
    <location>
        <begin position="77"/>
        <end position="98"/>
    </location>
</feature>
<feature type="transmembrane region" description="Helical" evidence="2">
    <location>
        <begin position="113"/>
        <end position="133"/>
    </location>
</feature>
<feature type="transmembrane region" description="Helical" evidence="2">
    <location>
        <begin position="178"/>
        <end position="198"/>
    </location>
</feature>
<feature type="transmembrane region" description="Helical" evidence="2">
    <location>
        <begin position="226"/>
        <end position="246"/>
    </location>
</feature>
<feature type="transmembrane region" description="Helical" evidence="2">
    <location>
        <begin position="288"/>
        <end position="308"/>
    </location>
</feature>
<feature type="transmembrane region" description="Helical" evidence="2">
    <location>
        <begin position="320"/>
        <end position="340"/>
    </location>
</feature>
<feature type="transmembrane region" description="Helical" evidence="2">
    <location>
        <begin position="347"/>
        <end position="367"/>
    </location>
</feature>
<feature type="binding site" description="axial binding residue" evidence="2">
    <location>
        <position position="83"/>
    </location>
    <ligand>
        <name>heme b</name>
        <dbReference type="ChEBI" id="CHEBI:60344"/>
        <label>b562</label>
    </ligand>
    <ligandPart>
        <name>Fe</name>
        <dbReference type="ChEBI" id="CHEBI:18248"/>
    </ligandPart>
</feature>
<feature type="binding site" description="axial binding residue" evidence="2">
    <location>
        <position position="97"/>
    </location>
    <ligand>
        <name>heme b</name>
        <dbReference type="ChEBI" id="CHEBI:60344"/>
        <label>b566</label>
    </ligand>
    <ligandPart>
        <name>Fe</name>
        <dbReference type="ChEBI" id="CHEBI:18248"/>
    </ligandPart>
</feature>
<feature type="binding site" description="axial binding residue" evidence="2">
    <location>
        <position position="182"/>
    </location>
    <ligand>
        <name>heme b</name>
        <dbReference type="ChEBI" id="CHEBI:60344"/>
        <label>b562</label>
    </ligand>
    <ligandPart>
        <name>Fe</name>
        <dbReference type="ChEBI" id="CHEBI:18248"/>
    </ligandPart>
</feature>
<feature type="binding site" description="axial binding residue" evidence="2">
    <location>
        <position position="196"/>
    </location>
    <ligand>
        <name>heme b</name>
        <dbReference type="ChEBI" id="CHEBI:60344"/>
        <label>b566</label>
    </ligand>
    <ligandPart>
        <name>Fe</name>
        <dbReference type="ChEBI" id="CHEBI:18248"/>
    </ligandPart>
</feature>
<feature type="binding site" evidence="2">
    <location>
        <position position="201"/>
    </location>
    <ligand>
        <name>a ubiquinone</name>
        <dbReference type="ChEBI" id="CHEBI:16389"/>
    </ligand>
</feature>
<organism>
    <name type="scientific">Paralichthys olivaceus</name>
    <name type="common">Bastard halibut</name>
    <name type="synonym">Hippoglossus olivaceus</name>
    <dbReference type="NCBI Taxonomy" id="8255"/>
    <lineage>
        <taxon>Eukaryota</taxon>
        <taxon>Metazoa</taxon>
        <taxon>Chordata</taxon>
        <taxon>Craniata</taxon>
        <taxon>Vertebrata</taxon>
        <taxon>Euteleostomi</taxon>
        <taxon>Actinopterygii</taxon>
        <taxon>Neopterygii</taxon>
        <taxon>Teleostei</taxon>
        <taxon>Neoteleostei</taxon>
        <taxon>Acanthomorphata</taxon>
        <taxon>Carangaria</taxon>
        <taxon>Pleuronectiformes</taxon>
        <taxon>Pleuronectoidei</taxon>
        <taxon>Paralichthyidae</taxon>
        <taxon>Paralichthys</taxon>
    </lineage>
</organism>
<protein>
    <recommendedName>
        <fullName>Cytochrome b</fullName>
    </recommendedName>
    <alternativeName>
        <fullName>Complex III subunit 3</fullName>
    </alternativeName>
    <alternativeName>
        <fullName>Complex III subunit III</fullName>
    </alternativeName>
    <alternativeName>
        <fullName>Cytochrome b-c1 complex subunit 3</fullName>
    </alternativeName>
    <alternativeName>
        <fullName>Ubiquinol-cytochrome-c reductase complex cytochrome b subunit</fullName>
    </alternativeName>
</protein>
<dbReference type="EMBL" id="AB028664">
    <property type="protein sequence ID" value="BAA89045.1"/>
    <property type="molecule type" value="Genomic_DNA"/>
</dbReference>
<dbReference type="RefSeq" id="NP_037594.1">
    <property type="nucleotide sequence ID" value="NC_002386.1"/>
</dbReference>
<dbReference type="SMR" id="Q9T9C8"/>
<dbReference type="GeneID" id="808839"/>
<dbReference type="KEGG" id="pov:808839"/>
<dbReference type="CTD" id="4519"/>
<dbReference type="OrthoDB" id="244at2759"/>
<dbReference type="GO" id="GO:0005743">
    <property type="term" value="C:mitochondrial inner membrane"/>
    <property type="evidence" value="ECO:0007669"/>
    <property type="project" value="UniProtKB-SubCell"/>
</dbReference>
<dbReference type="GO" id="GO:0045275">
    <property type="term" value="C:respiratory chain complex III"/>
    <property type="evidence" value="ECO:0007669"/>
    <property type="project" value="InterPro"/>
</dbReference>
<dbReference type="GO" id="GO:0046872">
    <property type="term" value="F:metal ion binding"/>
    <property type="evidence" value="ECO:0007669"/>
    <property type="project" value="UniProtKB-KW"/>
</dbReference>
<dbReference type="GO" id="GO:0008121">
    <property type="term" value="F:ubiquinol-cytochrome-c reductase activity"/>
    <property type="evidence" value="ECO:0007669"/>
    <property type="project" value="InterPro"/>
</dbReference>
<dbReference type="GO" id="GO:0006122">
    <property type="term" value="P:mitochondrial electron transport, ubiquinol to cytochrome c"/>
    <property type="evidence" value="ECO:0007669"/>
    <property type="project" value="TreeGrafter"/>
</dbReference>
<dbReference type="CDD" id="cd00290">
    <property type="entry name" value="cytochrome_b_C"/>
    <property type="match status" value="1"/>
</dbReference>
<dbReference type="CDD" id="cd00284">
    <property type="entry name" value="Cytochrome_b_N"/>
    <property type="match status" value="1"/>
</dbReference>
<dbReference type="FunFam" id="1.20.810.10:FF:000002">
    <property type="entry name" value="Cytochrome b"/>
    <property type="match status" value="1"/>
</dbReference>
<dbReference type="Gene3D" id="1.20.810.10">
    <property type="entry name" value="Cytochrome Bc1 Complex, Chain C"/>
    <property type="match status" value="1"/>
</dbReference>
<dbReference type="InterPro" id="IPR005798">
    <property type="entry name" value="Cyt_b/b6_C"/>
</dbReference>
<dbReference type="InterPro" id="IPR036150">
    <property type="entry name" value="Cyt_b/b6_C_sf"/>
</dbReference>
<dbReference type="InterPro" id="IPR005797">
    <property type="entry name" value="Cyt_b/b6_N"/>
</dbReference>
<dbReference type="InterPro" id="IPR027387">
    <property type="entry name" value="Cytb/b6-like_sf"/>
</dbReference>
<dbReference type="InterPro" id="IPR030689">
    <property type="entry name" value="Cytochrome_b"/>
</dbReference>
<dbReference type="InterPro" id="IPR048260">
    <property type="entry name" value="Cytochrome_b_C_euk/bac"/>
</dbReference>
<dbReference type="InterPro" id="IPR048259">
    <property type="entry name" value="Cytochrome_b_N_euk/bac"/>
</dbReference>
<dbReference type="InterPro" id="IPR016174">
    <property type="entry name" value="Di-haem_cyt_TM"/>
</dbReference>
<dbReference type="PANTHER" id="PTHR19271">
    <property type="entry name" value="CYTOCHROME B"/>
    <property type="match status" value="1"/>
</dbReference>
<dbReference type="PANTHER" id="PTHR19271:SF16">
    <property type="entry name" value="CYTOCHROME B"/>
    <property type="match status" value="1"/>
</dbReference>
<dbReference type="Pfam" id="PF00032">
    <property type="entry name" value="Cytochrom_B_C"/>
    <property type="match status" value="1"/>
</dbReference>
<dbReference type="Pfam" id="PF00033">
    <property type="entry name" value="Cytochrome_B"/>
    <property type="match status" value="1"/>
</dbReference>
<dbReference type="PIRSF" id="PIRSF038885">
    <property type="entry name" value="COB"/>
    <property type="match status" value="1"/>
</dbReference>
<dbReference type="SUPFAM" id="SSF81648">
    <property type="entry name" value="a domain/subunit of cytochrome bc1 complex (Ubiquinol-cytochrome c reductase)"/>
    <property type="match status" value="1"/>
</dbReference>
<dbReference type="SUPFAM" id="SSF81342">
    <property type="entry name" value="Transmembrane di-heme cytochromes"/>
    <property type="match status" value="1"/>
</dbReference>
<dbReference type="PROSITE" id="PS51003">
    <property type="entry name" value="CYTB_CTER"/>
    <property type="match status" value="1"/>
</dbReference>
<dbReference type="PROSITE" id="PS51002">
    <property type="entry name" value="CYTB_NTER"/>
    <property type="match status" value="1"/>
</dbReference>
<reference key="1">
    <citation type="journal article" date="2000" name="J. Hered.">
        <title>Complete nucleotide sequence of Japanese flounder (Paralichthys olivaceus) mitochondrial genome: structural properties and cue for resolving teleostean relationships.</title>
        <authorList>
            <person name="Saitoh K."/>
            <person name="Hayashizaki K."/>
            <person name="Yokoyama Y."/>
            <person name="Asahida T."/>
            <person name="Toyohara H."/>
            <person name="Yamashita Y."/>
        </authorList>
    </citation>
    <scope>NUCLEOTIDE SEQUENCE [GENOMIC DNA]</scope>
</reference>
<sequence>MASLRKSHPLLKIANDALVDLPAPSNISVWWNFGSLLGLCLITQILTGLFLAMHYTSDIATAFTSVAHICRDVNYGWLIRNIHANGASFFFICIYLHIGRGLYYGSFLYKETWNVGVILLLLVMMTAFVGYVLPWGQMSFWGATVITNLLSAVPYVGNTLVQWIWGGFSVDNATLTRFFAFHFLFPFVIAAATVIHLIFLHETGSNNPTGLNSDSDKVPFHPYFSYKDLLGFAALLIALAALALFSPNLLGDPDNFTPANPLVTPPHIKPEWYFLFAYAILRSIPNKLGGVLALLFSILILMLVPILHTSKQRSLMFRPFSQFLFWSLVADVMILTWIGGMPVEHPFVIIGQVASFLYFFLFLVMIPVTGWLENKILGWQ</sequence>
<comment type="function">
    <text evidence="2">Component of the ubiquinol-cytochrome c reductase complex (complex III or cytochrome b-c1 complex) that is part of the mitochondrial respiratory chain. The b-c1 complex mediates electron transfer from ubiquinol to cytochrome c. Contributes to the generation of a proton gradient across the mitochondrial membrane that is then used for ATP synthesis.</text>
</comment>
<comment type="cofactor">
    <cofactor evidence="2">
        <name>heme b</name>
        <dbReference type="ChEBI" id="CHEBI:60344"/>
    </cofactor>
    <text evidence="2">Binds 2 heme b groups non-covalently.</text>
</comment>
<comment type="subunit">
    <text evidence="2">The cytochrome bc1 complex contains 3 respiratory subunits (MT-CYB, CYC1 and UQCRFS1), 2 core proteins (UQCRC1 and UQCRC2) and probably 6 low-molecular weight proteins.</text>
</comment>
<comment type="subcellular location">
    <subcellularLocation>
        <location evidence="2">Mitochondrion inner membrane</location>
        <topology evidence="2">Multi-pass membrane protein</topology>
    </subcellularLocation>
</comment>
<comment type="miscellaneous">
    <text evidence="1">Heme 1 (or BL or b562) is low-potential and absorbs at about 562 nm, and heme 2 (or BH or b566) is high-potential and absorbs at about 566 nm.</text>
</comment>
<comment type="similarity">
    <text evidence="3 4">Belongs to the cytochrome b family.</text>
</comment>
<comment type="caution">
    <text evidence="2">The full-length protein contains only eight transmembrane helices, not nine as predicted by bioinformatics tools.</text>
</comment>